<feature type="chain" id="PRO_0000215757" description="ATP-dependent Clp protease adapter protein ClpS">
    <location>
        <begin position="1"/>
        <end position="106"/>
    </location>
</feature>
<protein>
    <recommendedName>
        <fullName evidence="1">ATP-dependent Clp protease adapter protein ClpS</fullName>
    </recommendedName>
</protein>
<keyword id="KW-1185">Reference proteome</keyword>
<gene>
    <name evidence="1" type="primary">clpS</name>
    <name type="ordered locus">VF_1766</name>
</gene>
<accession>Q5E3Y5</accession>
<sequence length="106" mass="12204">MSKLYEWISPDSDVLEQEKTELRPPSMYKVVLNNDDYTPMEFVVEVLDKFFSMDLEKATQLMLTVHYEGKAVCGTFTAEVAETKVAQVNTYSRDNEHPLLCTMEQA</sequence>
<reference key="1">
    <citation type="journal article" date="2005" name="Proc. Natl. Acad. Sci. U.S.A.">
        <title>Complete genome sequence of Vibrio fischeri: a symbiotic bacterium with pathogenic congeners.</title>
        <authorList>
            <person name="Ruby E.G."/>
            <person name="Urbanowski M."/>
            <person name="Campbell J."/>
            <person name="Dunn A."/>
            <person name="Faini M."/>
            <person name="Gunsalus R."/>
            <person name="Lostroh P."/>
            <person name="Lupp C."/>
            <person name="McCann J."/>
            <person name="Millikan D."/>
            <person name="Schaefer A."/>
            <person name="Stabb E."/>
            <person name="Stevens A."/>
            <person name="Visick K."/>
            <person name="Whistler C."/>
            <person name="Greenberg E.P."/>
        </authorList>
    </citation>
    <scope>NUCLEOTIDE SEQUENCE [LARGE SCALE GENOMIC DNA]</scope>
    <source>
        <strain>ATCC 700601 / ES114</strain>
    </source>
</reference>
<comment type="function">
    <text evidence="1">Involved in the modulation of the specificity of the ClpAP-mediated ATP-dependent protein degradation.</text>
</comment>
<comment type="subunit">
    <text evidence="1">Binds to the N-terminal domain of the chaperone ClpA.</text>
</comment>
<comment type="similarity">
    <text evidence="1">Belongs to the ClpS family.</text>
</comment>
<name>CLPS_ALIF1</name>
<evidence type="ECO:0000255" key="1">
    <source>
        <dbReference type="HAMAP-Rule" id="MF_00302"/>
    </source>
</evidence>
<dbReference type="EMBL" id="CP000020">
    <property type="protein sequence ID" value="AAW86261.1"/>
    <property type="molecule type" value="Genomic_DNA"/>
</dbReference>
<dbReference type="RefSeq" id="WP_005420184.1">
    <property type="nucleotide sequence ID" value="NZ_CAWLES010000001.1"/>
</dbReference>
<dbReference type="RefSeq" id="YP_205149.1">
    <property type="nucleotide sequence ID" value="NC_006840.2"/>
</dbReference>
<dbReference type="SMR" id="Q5E3Y5"/>
<dbReference type="STRING" id="312309.VF_1766"/>
<dbReference type="EnsemblBacteria" id="AAW86261">
    <property type="protein sequence ID" value="AAW86261"/>
    <property type="gene ID" value="VF_1766"/>
</dbReference>
<dbReference type="GeneID" id="54164465"/>
<dbReference type="KEGG" id="vfi:VF_1766"/>
<dbReference type="PATRIC" id="fig|312309.11.peg.1792"/>
<dbReference type="eggNOG" id="COG2127">
    <property type="taxonomic scope" value="Bacteria"/>
</dbReference>
<dbReference type="HOGENOM" id="CLU_134358_2_1_6"/>
<dbReference type="OrthoDB" id="9796121at2"/>
<dbReference type="Proteomes" id="UP000000537">
    <property type="component" value="Chromosome I"/>
</dbReference>
<dbReference type="GO" id="GO:0030163">
    <property type="term" value="P:protein catabolic process"/>
    <property type="evidence" value="ECO:0007669"/>
    <property type="project" value="InterPro"/>
</dbReference>
<dbReference type="GO" id="GO:0006508">
    <property type="term" value="P:proteolysis"/>
    <property type="evidence" value="ECO:0007669"/>
    <property type="project" value="UniProtKB-UniRule"/>
</dbReference>
<dbReference type="FunFam" id="3.30.1390.10:FF:000002">
    <property type="entry name" value="ATP-dependent Clp protease adapter protein ClpS"/>
    <property type="match status" value="1"/>
</dbReference>
<dbReference type="Gene3D" id="3.30.1390.10">
    <property type="match status" value="1"/>
</dbReference>
<dbReference type="HAMAP" id="MF_00302">
    <property type="entry name" value="ClpS"/>
    <property type="match status" value="1"/>
</dbReference>
<dbReference type="InterPro" id="IPR022935">
    <property type="entry name" value="ClpS"/>
</dbReference>
<dbReference type="InterPro" id="IPR003769">
    <property type="entry name" value="ClpS_core"/>
</dbReference>
<dbReference type="InterPro" id="IPR014719">
    <property type="entry name" value="Ribosomal_bL12_C/ClpS-like"/>
</dbReference>
<dbReference type="NCBIfam" id="NF000670">
    <property type="entry name" value="PRK00033.1-3"/>
    <property type="match status" value="1"/>
</dbReference>
<dbReference type="NCBIfam" id="NF000672">
    <property type="entry name" value="PRK00033.1-5"/>
    <property type="match status" value="1"/>
</dbReference>
<dbReference type="PANTHER" id="PTHR33473:SF19">
    <property type="entry name" value="ATP-DEPENDENT CLP PROTEASE ADAPTER PROTEIN CLPS"/>
    <property type="match status" value="1"/>
</dbReference>
<dbReference type="PANTHER" id="PTHR33473">
    <property type="entry name" value="ATP-DEPENDENT CLP PROTEASE ADAPTER PROTEIN CLPS1, CHLOROPLASTIC"/>
    <property type="match status" value="1"/>
</dbReference>
<dbReference type="Pfam" id="PF02617">
    <property type="entry name" value="ClpS"/>
    <property type="match status" value="1"/>
</dbReference>
<dbReference type="SUPFAM" id="SSF54736">
    <property type="entry name" value="ClpS-like"/>
    <property type="match status" value="1"/>
</dbReference>
<proteinExistence type="inferred from homology"/>
<organism>
    <name type="scientific">Aliivibrio fischeri (strain ATCC 700601 / ES114)</name>
    <name type="common">Vibrio fischeri</name>
    <dbReference type="NCBI Taxonomy" id="312309"/>
    <lineage>
        <taxon>Bacteria</taxon>
        <taxon>Pseudomonadati</taxon>
        <taxon>Pseudomonadota</taxon>
        <taxon>Gammaproteobacteria</taxon>
        <taxon>Vibrionales</taxon>
        <taxon>Vibrionaceae</taxon>
        <taxon>Aliivibrio</taxon>
    </lineage>
</organism>